<protein>
    <recommendedName>
        <fullName>Mitochondrial import receptor subunit TOM5 homolog</fullName>
    </recommendedName>
    <alternativeName>
        <fullName>Translocase of outer membrane 5 kDa subunit homolog</fullName>
    </alternativeName>
</protein>
<organism evidence="6">
    <name type="scientific">Arabidopsis thaliana</name>
    <name type="common">Mouse-ear cress</name>
    <dbReference type="NCBI Taxonomy" id="3702"/>
    <lineage>
        <taxon>Eukaryota</taxon>
        <taxon>Viridiplantae</taxon>
        <taxon>Streptophyta</taxon>
        <taxon>Embryophyta</taxon>
        <taxon>Tracheophyta</taxon>
        <taxon>Spermatophyta</taxon>
        <taxon>Magnoliopsida</taxon>
        <taxon>eudicotyledons</taxon>
        <taxon>Gunneridae</taxon>
        <taxon>Pentapetalae</taxon>
        <taxon>rosids</taxon>
        <taxon>malvids</taxon>
        <taxon>Brassicales</taxon>
        <taxon>Brassicaceae</taxon>
        <taxon>Camelineae</taxon>
        <taxon>Arabidopsis</taxon>
    </lineage>
</organism>
<reference evidence="4" key="1">
    <citation type="journal article" date="2000" name="Nature">
        <title>Sequence and analysis of chromosome 5 of the plant Arabidopsis thaliana.</title>
        <authorList>
            <person name="Tabata S."/>
            <person name="Kaneko T."/>
            <person name="Nakamura Y."/>
            <person name="Kotani H."/>
            <person name="Kato T."/>
            <person name="Asamizu E."/>
            <person name="Miyajima N."/>
            <person name="Sasamoto S."/>
            <person name="Kimura T."/>
            <person name="Hosouchi T."/>
            <person name="Kawashima K."/>
            <person name="Kohara M."/>
            <person name="Matsumoto M."/>
            <person name="Matsuno A."/>
            <person name="Muraki A."/>
            <person name="Nakayama S."/>
            <person name="Nakazaki N."/>
            <person name="Naruo K."/>
            <person name="Okumura S."/>
            <person name="Shinpo S."/>
            <person name="Takeuchi C."/>
            <person name="Wada T."/>
            <person name="Watanabe A."/>
            <person name="Yamada M."/>
            <person name="Yasuda M."/>
            <person name="Sato S."/>
            <person name="de la Bastide M."/>
            <person name="Huang E."/>
            <person name="Spiegel L."/>
            <person name="Gnoj L."/>
            <person name="O'Shaughnessy A."/>
            <person name="Preston R."/>
            <person name="Habermann K."/>
            <person name="Murray J."/>
            <person name="Johnson D."/>
            <person name="Rohlfing T."/>
            <person name="Nelson J."/>
            <person name="Stoneking T."/>
            <person name="Pepin K."/>
            <person name="Spieth J."/>
            <person name="Sekhon M."/>
            <person name="Armstrong J."/>
            <person name="Becker M."/>
            <person name="Belter E."/>
            <person name="Cordum H."/>
            <person name="Cordes M."/>
            <person name="Courtney L."/>
            <person name="Courtney W."/>
            <person name="Dante M."/>
            <person name="Du H."/>
            <person name="Edwards J."/>
            <person name="Fryman J."/>
            <person name="Haakensen B."/>
            <person name="Lamar E."/>
            <person name="Latreille P."/>
            <person name="Leonard S."/>
            <person name="Meyer R."/>
            <person name="Mulvaney E."/>
            <person name="Ozersky P."/>
            <person name="Riley A."/>
            <person name="Strowmatt C."/>
            <person name="Wagner-McPherson C."/>
            <person name="Wollam A."/>
            <person name="Yoakum M."/>
            <person name="Bell M."/>
            <person name="Dedhia N."/>
            <person name="Parnell L."/>
            <person name="Shah R."/>
            <person name="Rodriguez M."/>
            <person name="Hoon See L."/>
            <person name="Vil D."/>
            <person name="Baker J."/>
            <person name="Kirchoff K."/>
            <person name="Toth K."/>
            <person name="King L."/>
            <person name="Bahret A."/>
            <person name="Miller B."/>
            <person name="Marra M.A."/>
            <person name="Martienssen R."/>
            <person name="McCombie W.R."/>
            <person name="Wilson R.K."/>
            <person name="Murphy G."/>
            <person name="Bancroft I."/>
            <person name="Volckaert G."/>
            <person name="Wambutt R."/>
            <person name="Duesterhoeft A."/>
            <person name="Stiekema W."/>
            <person name="Pohl T."/>
            <person name="Entian K.-D."/>
            <person name="Terryn N."/>
            <person name="Hartley N."/>
            <person name="Bent E."/>
            <person name="Johnson S."/>
            <person name="Langham S.-A."/>
            <person name="McCullagh B."/>
            <person name="Robben J."/>
            <person name="Grymonprez B."/>
            <person name="Zimmermann W."/>
            <person name="Ramsperger U."/>
            <person name="Wedler H."/>
            <person name="Balke K."/>
            <person name="Wedler E."/>
            <person name="Peters S."/>
            <person name="van Staveren M."/>
            <person name="Dirkse W."/>
            <person name="Mooijman P."/>
            <person name="Klein Lankhorst R."/>
            <person name="Weitzenegger T."/>
            <person name="Bothe G."/>
            <person name="Rose M."/>
            <person name="Hauf J."/>
            <person name="Berneiser S."/>
            <person name="Hempel S."/>
            <person name="Feldpausch M."/>
            <person name="Lamberth S."/>
            <person name="Villarroel R."/>
            <person name="Gielen J."/>
            <person name="Ardiles W."/>
            <person name="Bents O."/>
            <person name="Lemcke K."/>
            <person name="Kolesov G."/>
            <person name="Mayer K.F.X."/>
            <person name="Rudd S."/>
            <person name="Schoof H."/>
            <person name="Schueller C."/>
            <person name="Zaccaria P."/>
            <person name="Mewes H.-W."/>
            <person name="Bevan M."/>
            <person name="Fransz P.F."/>
        </authorList>
    </citation>
    <scope>NUCLEOTIDE SEQUENCE [LARGE SCALE GENOMIC DNA]</scope>
    <source>
        <strain evidence="6">cv. Columbia</strain>
    </source>
</reference>
<reference evidence="5" key="2">
    <citation type="journal article" date="2017" name="Plant J.">
        <title>Araport11: a complete reannotation of the Arabidopsis thaliana reference genome.</title>
        <authorList>
            <person name="Cheng C.Y."/>
            <person name="Krishnakumar V."/>
            <person name="Chan A.P."/>
            <person name="Thibaud-Nissen F."/>
            <person name="Schobel S."/>
            <person name="Town C.D."/>
        </authorList>
    </citation>
    <scope>GENOME REANNOTATION</scope>
    <source>
        <strain>cv. Columbia</strain>
    </source>
</reference>
<reference evidence="5" key="3">
    <citation type="submission" date="2004-01" db="EMBL/GenBank/DDBJ databases">
        <title>Arabidopsis ORF clones.</title>
        <authorList>
            <person name="Cheuk R.F."/>
            <person name="Chen H."/>
            <person name="Kim C.J."/>
            <person name="Shinn P."/>
            <person name="Ecker J.R."/>
        </authorList>
    </citation>
    <scope>NUCLEOTIDE SEQUENCE [LARGE SCALE MRNA]</scope>
    <source>
        <strain evidence="5">cv. Columbia</strain>
    </source>
</reference>
<reference evidence="4" key="4">
    <citation type="journal article" date="2003" name="Plant Physiol. Biochem.">
        <title>Identification of novel subunits of the TOM complex from Arabidopsis thaliana.</title>
        <authorList>
            <person name="Werhahn W."/>
            <person name="Jaensch L."/>
            <person name="Braun H.-P."/>
        </authorList>
    </citation>
    <scope>PROTEIN SEQUENCE OF 2-13</scope>
    <scope>SUBUNIT</scope>
    <scope>SUBCELLULAR LOCATION</scope>
</reference>
<reference key="5">
    <citation type="journal article" date="2004" name="Plant Physiol.">
        <title>A transcriptomic and proteomic characterization of the Arabidopsis mitochondrial protein import apparatus and its response to mitochondrial dysfunction.</title>
        <authorList>
            <person name="Lister R."/>
            <person name="Chew O."/>
            <person name="Lee M.N."/>
            <person name="Heazlewood J.L."/>
            <person name="Clifton R."/>
            <person name="Parker K.L."/>
            <person name="Millar A.H."/>
            <person name="Whelan J."/>
        </authorList>
    </citation>
    <scope>TISSUE SPECIFICITY</scope>
</reference>
<gene>
    <name type="primary">TOM5</name>
    <name type="ordered locus">At5g08040</name>
    <name type="ORF">F13G24.240</name>
</gene>
<name>TOM5_ARATH</name>
<feature type="initiator methionine" description="Removed" evidence="3">
    <location>
        <position position="1"/>
    </location>
</feature>
<feature type="chain" id="PRO_0000218263" description="Mitochondrial import receptor subunit TOM5 homolog">
    <location>
        <begin position="2"/>
        <end position="54"/>
    </location>
</feature>
<feature type="topological domain" description="Cytoplasmic" evidence="1">
    <location>
        <begin position="2"/>
        <end position="30"/>
    </location>
</feature>
<feature type="transmembrane region" description="Helical; Signal-anchor" evidence="1">
    <location>
        <begin position="31"/>
        <end position="48"/>
    </location>
</feature>
<proteinExistence type="evidence at protein level"/>
<sequence length="54" mass="6091">MVNNVVSIEKMKALWHSEVHDEQKWAVNMKLLRALGMFAGGVVLMRSYGDLMGV</sequence>
<dbReference type="EMBL" id="AL133421">
    <property type="protein sequence ID" value="CAB62616.1"/>
    <property type="molecule type" value="Genomic_DNA"/>
</dbReference>
<dbReference type="EMBL" id="CP002688">
    <property type="protein sequence ID" value="AED91237.1"/>
    <property type="molecule type" value="Genomic_DNA"/>
</dbReference>
<dbReference type="EMBL" id="BT011252">
    <property type="protein sequence ID" value="AAR92288.1"/>
    <property type="molecule type" value="mRNA"/>
</dbReference>
<dbReference type="PIR" id="T45629">
    <property type="entry name" value="T45629"/>
</dbReference>
<dbReference type="RefSeq" id="NP_196421.1">
    <property type="nucleotide sequence ID" value="NM_120886.3"/>
</dbReference>
<dbReference type="FunCoup" id="Q9SD80">
    <property type="interactions" value="255"/>
</dbReference>
<dbReference type="STRING" id="3702.Q9SD80"/>
<dbReference type="PaxDb" id="3702-AT5G08040.1"/>
<dbReference type="ProteomicsDB" id="234285"/>
<dbReference type="DNASU" id="830698"/>
<dbReference type="EnsemblPlants" id="AT5G08040.1">
    <property type="protein sequence ID" value="AT5G08040.1"/>
    <property type="gene ID" value="AT5G08040"/>
</dbReference>
<dbReference type="GeneID" id="830698"/>
<dbReference type="Gramene" id="AT5G08040.1">
    <property type="protein sequence ID" value="AT5G08040.1"/>
    <property type="gene ID" value="AT5G08040"/>
</dbReference>
<dbReference type="KEGG" id="ath:AT5G08040"/>
<dbReference type="Araport" id="AT5G08040"/>
<dbReference type="TAIR" id="AT5G08040">
    <property type="gene designation" value="TOM5"/>
</dbReference>
<dbReference type="eggNOG" id="ENOG502S78P">
    <property type="taxonomic scope" value="Eukaryota"/>
</dbReference>
<dbReference type="HOGENOM" id="CLU_214046_0_0_1"/>
<dbReference type="InParanoid" id="Q9SD80"/>
<dbReference type="OMA" id="HDEQKWA"/>
<dbReference type="OrthoDB" id="5514856at2759"/>
<dbReference type="PhylomeDB" id="Q9SD80"/>
<dbReference type="PRO" id="PR:Q9SD80"/>
<dbReference type="Proteomes" id="UP000006548">
    <property type="component" value="Chromosome 5"/>
</dbReference>
<dbReference type="ExpressionAtlas" id="Q9SD80">
    <property type="expression patterns" value="baseline and differential"/>
</dbReference>
<dbReference type="GO" id="GO:0005742">
    <property type="term" value="C:mitochondrial outer membrane translocase complex"/>
    <property type="evidence" value="ECO:0007669"/>
    <property type="project" value="InterPro"/>
</dbReference>
<dbReference type="GO" id="GO:0005739">
    <property type="term" value="C:mitochondrion"/>
    <property type="evidence" value="ECO:0007005"/>
    <property type="project" value="TAIR"/>
</dbReference>
<dbReference type="GO" id="GO:0005886">
    <property type="term" value="C:plasma membrane"/>
    <property type="evidence" value="ECO:0007005"/>
    <property type="project" value="TAIR"/>
</dbReference>
<dbReference type="GO" id="GO:0015031">
    <property type="term" value="P:protein transport"/>
    <property type="evidence" value="ECO:0007669"/>
    <property type="project" value="UniProtKB-KW"/>
</dbReference>
<dbReference type="InterPro" id="IPR034553">
    <property type="entry name" value="TOM5_viridi"/>
</dbReference>
<dbReference type="PANTHER" id="PTHR37251">
    <property type="entry name" value="MITOCHONDRIAL IMPORT RECEPTOR SUBUNIT TOM5 HOMOLOG"/>
    <property type="match status" value="1"/>
</dbReference>
<dbReference type="PANTHER" id="PTHR37251:SF1">
    <property type="entry name" value="MITOCHONDRIAL IMPORT RECEPTOR SUBUNIT TOM5 HOMOLOG"/>
    <property type="match status" value="1"/>
</dbReference>
<accession>Q9SD80</accession>
<accession>P83431</accession>
<keyword id="KW-0903">Direct protein sequencing</keyword>
<keyword id="KW-0472">Membrane</keyword>
<keyword id="KW-0496">Mitochondrion</keyword>
<keyword id="KW-1000">Mitochondrion outer membrane</keyword>
<keyword id="KW-0653">Protein transport</keyword>
<keyword id="KW-1185">Reference proteome</keyword>
<keyword id="KW-0812">Transmembrane</keyword>
<keyword id="KW-1133">Transmembrane helix</keyword>
<keyword id="KW-0813">Transport</keyword>
<comment type="function">
    <text evidence="4">A component of the complex responsible for the recognition and translocation of cytosolically synthesized mitochondrial preproteins.</text>
</comment>
<comment type="subunit">
    <text evidence="3 4">Forms part of the receptor complex that consists of at least 6 different proteins (TOM5, TOM6, TOM7, TOM20, TOM22/TOM9 and TOM40).</text>
</comment>
<comment type="subcellular location">
    <subcellularLocation>
        <location evidence="3">Mitochondrion outer membrane</location>
        <topology evidence="3">Single-pass membrane protein</topology>
    </subcellularLocation>
</comment>
<comment type="tissue specificity">
    <text evidence="2">Expressed in roots, flowers, young cotyledons and leaves.</text>
</comment>
<comment type="similarity">
    <text evidence="4">Belongs to the Tom5 family.</text>
</comment>
<evidence type="ECO:0000255" key="1"/>
<evidence type="ECO:0000269" key="2">
    <source>
    </source>
</evidence>
<evidence type="ECO:0000269" key="3">
    <source ref="4"/>
</evidence>
<evidence type="ECO:0000305" key="4"/>
<evidence type="ECO:0000312" key="5">
    <source>
        <dbReference type="EMBL" id="AAR92288.1"/>
    </source>
</evidence>
<evidence type="ECO:0000312" key="6">
    <source>
        <dbReference type="EMBL" id="CAB62616.1"/>
    </source>
</evidence>